<keyword id="KW-0210">Decarboxylase</keyword>
<keyword id="KW-0456">Lyase</keyword>
<keyword id="KW-0614">Plasmid</keyword>
<keyword id="KW-0663">Pyridoxal phosphate</keyword>
<name>DCHS_VIBA7</name>
<organism>
    <name type="scientific">Vibrio anguillarum (strain ATCC 68554 / 775)</name>
    <name type="common">Listonella anguillarum</name>
    <dbReference type="NCBI Taxonomy" id="882102"/>
    <lineage>
        <taxon>Bacteria</taxon>
        <taxon>Pseudomonadati</taxon>
        <taxon>Pseudomonadota</taxon>
        <taxon>Gammaproteobacteria</taxon>
        <taxon>Vibrionales</taxon>
        <taxon>Vibrionaceae</taxon>
        <taxon>Vibrio</taxon>
    </lineage>
</organism>
<geneLocation type="plasmid">
    <name>pJM1</name>
</geneLocation>
<reference key="1">
    <citation type="journal article" date="1995" name="Mol. Microbiol.">
        <title>A histidine decarboxylase gene encoded by the Vibrio anguillarum plasmid pJM1 is essential for virulence: histamine is a precursor in the biosynthesis of anguibactin.</title>
        <authorList>
            <person name="Tolmasky M.E."/>
            <person name="Actis L.A."/>
            <person name="Crosa J.H."/>
        </authorList>
    </citation>
    <scope>NUCLEOTIDE SEQUENCE [GENOMIC DNA]</scope>
    <source>
        <strain>ATCC 68554 / 775</strain>
    </source>
</reference>
<reference key="2">
    <citation type="journal article" date="2003" name="J. Bacteriol.">
        <title>Complete sequence of virulence plasmid pJM1 from the marine fish pathogen Vibrio anguillarum strain 775.</title>
        <authorList>
            <person name="Di Lorenzo M."/>
            <person name="Stork M."/>
            <person name="Tolmasky M.E."/>
            <person name="Actis L.A."/>
            <person name="Farrell D."/>
            <person name="Welch T.J."/>
            <person name="Crosa L.M."/>
            <person name="Wertheimer A.M."/>
            <person name="Chen Q."/>
            <person name="Salinas P."/>
            <person name="Waldbeser L."/>
            <person name="Crosa J.H."/>
        </authorList>
    </citation>
    <scope>NUCLEOTIDE SEQUENCE [LARGE SCALE GENOMIC DNA]</scope>
    <source>
        <strain>ATCC 68554 / 775</strain>
    </source>
</reference>
<reference key="3">
    <citation type="journal article" date="2011" name="Infect. Immun.">
        <title>Complete genome sequence of the marine fish pathogen Vibrio anguillarum harboring the pJM1 virulence plasmid and genomic comparison with other virulent strains of V. anguillarum and V. ordalii.</title>
        <authorList>
            <person name="Naka H."/>
            <person name="Dias G.M."/>
            <person name="Thompson C.C."/>
            <person name="Dubay C."/>
            <person name="Thompson F.L."/>
            <person name="Crosa J.H."/>
        </authorList>
    </citation>
    <scope>NUCLEOTIDE SEQUENCE [LARGE SCALE GENOMIC DNA]</scope>
    <source>
        <strain>ATCC 68554 / 775</strain>
    </source>
</reference>
<comment type="catalytic activity">
    <reaction evidence="1">
        <text>L-histidine + H(+) = histamine + CO2</text>
        <dbReference type="Rhea" id="RHEA:20840"/>
        <dbReference type="ChEBI" id="CHEBI:15378"/>
        <dbReference type="ChEBI" id="CHEBI:16526"/>
        <dbReference type="ChEBI" id="CHEBI:57595"/>
        <dbReference type="ChEBI" id="CHEBI:58432"/>
        <dbReference type="EC" id="4.1.1.22"/>
    </reaction>
</comment>
<comment type="cofactor">
    <cofactor evidence="1">
        <name>pyridoxal 5'-phosphate</name>
        <dbReference type="ChEBI" id="CHEBI:597326"/>
    </cofactor>
</comment>
<comment type="pathway">
    <text>Siderophore biosynthesis; anguibactin biosynthesis.</text>
</comment>
<comment type="subunit">
    <text evidence="1">Homotetramer.</text>
</comment>
<comment type="similarity">
    <text evidence="1">Belongs to the group II decarboxylase family.</text>
</comment>
<comment type="sequence caution" evidence="2">
    <conflict type="erroneous initiation">
        <sequence resource="EMBL-CDS" id="AAR12533"/>
    </conflict>
    <text>Extended N-terminus.</text>
</comment>
<evidence type="ECO:0000255" key="1">
    <source>
        <dbReference type="HAMAP-Rule" id="MF_00609"/>
    </source>
</evidence>
<evidence type="ECO:0000305" key="2"/>
<feature type="chain" id="PRO_0000146961" description="Histidine decarboxylase">
    <location>
        <begin position="1"/>
        <end position="386"/>
    </location>
</feature>
<feature type="binding site" evidence="1">
    <location>
        <position position="120"/>
    </location>
    <ligand>
        <name>substrate</name>
    </ligand>
</feature>
<feature type="modified residue" description="N6-(pyridoxal phosphate)lysine" evidence="1">
    <location>
        <position position="233"/>
    </location>
</feature>
<protein>
    <recommendedName>
        <fullName evidence="1">Histidine decarboxylase</fullName>
        <shortName evidence="1">HDC</shortName>
        <ecNumber evidence="1">4.1.1.22</ecNumber>
    </recommendedName>
</protein>
<dbReference type="EC" id="4.1.1.22" evidence="1"/>
<dbReference type="EMBL" id="AY312585">
    <property type="protein sequence ID" value="AAR12533.1"/>
    <property type="status" value="ALT_INIT"/>
    <property type="molecule type" value="Genomic_DNA"/>
</dbReference>
<dbReference type="PIR" id="S60898">
    <property type="entry name" value="S49218"/>
</dbReference>
<dbReference type="RefSeq" id="NP_943559.1">
    <property type="nucleotide sequence ID" value="NC_005250.1"/>
</dbReference>
<dbReference type="RefSeq" id="WP_020977926.1">
    <property type="nucleotide sequence ID" value="NC_005250.1"/>
</dbReference>
<dbReference type="SMR" id="Q56581"/>
<dbReference type="eggNOG" id="COG0076">
    <property type="taxonomic scope" value="Bacteria"/>
</dbReference>
<dbReference type="BRENDA" id="4.1.1.22">
    <property type="organism ID" value="6625"/>
</dbReference>
<dbReference type="UniPathway" id="UPA00016"/>
<dbReference type="GO" id="GO:0004398">
    <property type="term" value="F:histidine decarboxylase activity"/>
    <property type="evidence" value="ECO:0007669"/>
    <property type="project" value="UniProtKB-UniRule"/>
</dbReference>
<dbReference type="GO" id="GO:0030170">
    <property type="term" value="F:pyridoxal phosphate binding"/>
    <property type="evidence" value="ECO:0007669"/>
    <property type="project" value="InterPro"/>
</dbReference>
<dbReference type="GO" id="GO:0019752">
    <property type="term" value="P:carboxylic acid metabolic process"/>
    <property type="evidence" value="ECO:0007669"/>
    <property type="project" value="InterPro"/>
</dbReference>
<dbReference type="Gene3D" id="3.40.640.10">
    <property type="entry name" value="Type I PLP-dependent aspartate aminotransferase-like (Major domain)"/>
    <property type="match status" value="1"/>
</dbReference>
<dbReference type="HAMAP" id="MF_00609">
    <property type="entry name" value="Pyridoxal_decarbox"/>
    <property type="match status" value="1"/>
</dbReference>
<dbReference type="InterPro" id="IPR051151">
    <property type="entry name" value="Group_II_Decarboxylase"/>
</dbReference>
<dbReference type="InterPro" id="IPR023523">
    <property type="entry name" value="Hist_deCOase_bac"/>
</dbReference>
<dbReference type="InterPro" id="IPR002129">
    <property type="entry name" value="PyrdxlP-dep_de-COase"/>
</dbReference>
<dbReference type="InterPro" id="IPR015424">
    <property type="entry name" value="PyrdxlP-dep_Trfase"/>
</dbReference>
<dbReference type="InterPro" id="IPR015421">
    <property type="entry name" value="PyrdxlP-dep_Trfase_major"/>
</dbReference>
<dbReference type="InterPro" id="IPR021115">
    <property type="entry name" value="Pyridoxal-P_BS"/>
</dbReference>
<dbReference type="NCBIfam" id="NF002748">
    <property type="entry name" value="PRK02769.1"/>
    <property type="match status" value="1"/>
</dbReference>
<dbReference type="PANTHER" id="PTHR46101">
    <property type="match status" value="1"/>
</dbReference>
<dbReference type="PANTHER" id="PTHR46101:SF2">
    <property type="entry name" value="SERINE DECARBOXYLASE"/>
    <property type="match status" value="1"/>
</dbReference>
<dbReference type="Pfam" id="PF00282">
    <property type="entry name" value="Pyridoxal_deC"/>
    <property type="match status" value="1"/>
</dbReference>
<dbReference type="SUPFAM" id="SSF53383">
    <property type="entry name" value="PLP-dependent transferases"/>
    <property type="match status" value="1"/>
</dbReference>
<dbReference type="PROSITE" id="PS00392">
    <property type="entry name" value="DDC_GAD_HDC_YDC"/>
    <property type="match status" value="1"/>
</dbReference>
<accession>Q56581</accession>
<accession>Q6W4S7</accession>
<sequence length="386" mass="44260">MKLSNEDLCKLNKFWLYCEENQYFNVGYPESAAFDYSILEKFMKFSINNCGDWREESNYKLNSFEFEKEVMRFFSQLFKIPYNDSWGYISNGGTEGNMFSCYLAREIFPTAYIYYSEETHYSVDKIVRLLNIPARKIRSLPSGEIDYQNLVDQIQKDKQKNPIIFANIGTTMRGATDNIQRIQQDLASIGLERNDYYIHADAALSGMIMPFVEQPHPYSFEDGIDSISVSGHKMIGSPIPCGIVLAKRHMVDQISVEVDYISSRDQTISGSRNGHSALFMWTAIKSHSFVDWQGKVNQCLNMAEYTVQRFQEVGINAWRNKNSNTVVFPCPSEPVWRKHSLANSGSVAHIITMPHLDGPDKLDPLIEDVIYDLLPNYNILNVSGQN</sequence>
<gene>
    <name evidence="1" type="primary">hdc</name>
    <name type="synonym">angH</name>
</gene>
<proteinExistence type="inferred from homology"/>